<gene>
    <name type="primary">AIM18</name>
    <name type="synonym">FMP22</name>
    <name type="ordered locus">KLLA0B03982g</name>
</gene>
<name>AIM18_KLULA</name>
<dbReference type="EMBL" id="CR382122">
    <property type="protein sequence ID" value="CAH02104.1"/>
    <property type="molecule type" value="Genomic_DNA"/>
</dbReference>
<dbReference type="RefSeq" id="XP_451711.1">
    <property type="nucleotide sequence ID" value="XM_451711.1"/>
</dbReference>
<dbReference type="SMR" id="Q6CWH8"/>
<dbReference type="FunCoup" id="Q6CWH8">
    <property type="interactions" value="49"/>
</dbReference>
<dbReference type="STRING" id="284590.Q6CWH8"/>
<dbReference type="PaxDb" id="284590-Q6CWH8"/>
<dbReference type="KEGG" id="kla:KLLA0_B03982g"/>
<dbReference type="eggNOG" id="ENOG502RGD3">
    <property type="taxonomic scope" value="Eukaryota"/>
</dbReference>
<dbReference type="HOGENOM" id="CLU_038840_0_0_1"/>
<dbReference type="InParanoid" id="Q6CWH8"/>
<dbReference type="OMA" id="PMRNTNF"/>
<dbReference type="Proteomes" id="UP000000598">
    <property type="component" value="Chromosome B"/>
</dbReference>
<dbReference type="GO" id="GO:0005739">
    <property type="term" value="C:mitochondrion"/>
    <property type="evidence" value="ECO:0007669"/>
    <property type="project" value="UniProtKB-SubCell"/>
</dbReference>
<dbReference type="GO" id="GO:0016872">
    <property type="term" value="F:intramolecular lyase activity"/>
    <property type="evidence" value="ECO:0007669"/>
    <property type="project" value="InterPro"/>
</dbReference>
<dbReference type="Gene3D" id="3.50.70.10">
    <property type="match status" value="1"/>
</dbReference>
<dbReference type="InterPro" id="IPR016087">
    <property type="entry name" value="Chalcone_isomerase"/>
</dbReference>
<dbReference type="InterPro" id="IPR016088">
    <property type="entry name" value="Chalcone_isomerase_3-sand"/>
</dbReference>
<dbReference type="InterPro" id="IPR036298">
    <property type="entry name" value="Chalcone_isomerase_sf"/>
</dbReference>
<dbReference type="PANTHER" id="PTHR47284">
    <property type="entry name" value="FATTY-ACID-BINDING PROTEIN 2"/>
    <property type="match status" value="1"/>
</dbReference>
<dbReference type="PANTHER" id="PTHR47284:SF3">
    <property type="entry name" value="FATTY-ACID-BINDING PROTEIN 2"/>
    <property type="match status" value="1"/>
</dbReference>
<dbReference type="Pfam" id="PF16035">
    <property type="entry name" value="Chalcone_2"/>
    <property type="match status" value="1"/>
</dbReference>
<dbReference type="SUPFAM" id="SSF54626">
    <property type="entry name" value="Chalcone isomerase"/>
    <property type="match status" value="1"/>
</dbReference>
<proteinExistence type="inferred from homology"/>
<sequence length="315" mass="34672">MLRFTHVLNNGAKRSALSLGRSYLRGFGSMHGPRVAVSTLIKKDKKPNGFRGMLALFVGIGTLAVSGLSTNLYNDQNVKEDPWKSVSVDKSIDPFPTELKAPEFPISTEYVMLGFGIRSVTFISFKVYGLGIYAAKEDLGLIPKVLDSNFLSTAFIDFDSSKSHQENLKTALDNPETSRILINNLLDSGIRLVAKITPIRNTDFNHLKDGLVKSILGHPDSKKDEDRLTNGLQQLRDAFSRKGSVPKNNDLLIELQANGYLQVSYFDRKTGESTTMGQVKETLIGKLLFSQYLSGPKPLSPSTKDSVVSKLVTLA</sequence>
<accession>Q6CWH8</accession>
<evidence type="ECO:0000250" key="1"/>
<evidence type="ECO:0000255" key="2"/>
<evidence type="ECO:0000305" key="3"/>
<organism>
    <name type="scientific">Kluyveromyces lactis (strain ATCC 8585 / CBS 2359 / DSM 70799 / NBRC 1267 / NRRL Y-1140 / WM37)</name>
    <name type="common">Yeast</name>
    <name type="synonym">Candida sphaerica</name>
    <dbReference type="NCBI Taxonomy" id="284590"/>
    <lineage>
        <taxon>Eukaryota</taxon>
        <taxon>Fungi</taxon>
        <taxon>Dikarya</taxon>
        <taxon>Ascomycota</taxon>
        <taxon>Saccharomycotina</taxon>
        <taxon>Saccharomycetes</taxon>
        <taxon>Saccharomycetales</taxon>
        <taxon>Saccharomycetaceae</taxon>
        <taxon>Kluyveromyces</taxon>
    </lineage>
</organism>
<feature type="transit peptide" description="Mitochondrion" evidence="2">
    <location>
        <begin position="1"/>
        <end position="35"/>
    </location>
</feature>
<feature type="chain" id="PRO_0000399552" description="Altered inheritance of mitochondria protein 18, mitochondrial">
    <location>
        <begin position="36"/>
        <end position="315"/>
    </location>
</feature>
<protein>
    <recommendedName>
        <fullName>Altered inheritance of mitochondria protein 18, mitochondrial</fullName>
    </recommendedName>
</protein>
<reference key="1">
    <citation type="journal article" date="2004" name="Nature">
        <title>Genome evolution in yeasts.</title>
        <authorList>
            <person name="Dujon B."/>
            <person name="Sherman D."/>
            <person name="Fischer G."/>
            <person name="Durrens P."/>
            <person name="Casaregola S."/>
            <person name="Lafontaine I."/>
            <person name="de Montigny J."/>
            <person name="Marck C."/>
            <person name="Neuveglise C."/>
            <person name="Talla E."/>
            <person name="Goffard N."/>
            <person name="Frangeul L."/>
            <person name="Aigle M."/>
            <person name="Anthouard V."/>
            <person name="Babour A."/>
            <person name="Barbe V."/>
            <person name="Barnay S."/>
            <person name="Blanchin S."/>
            <person name="Beckerich J.-M."/>
            <person name="Beyne E."/>
            <person name="Bleykasten C."/>
            <person name="Boisrame A."/>
            <person name="Boyer J."/>
            <person name="Cattolico L."/>
            <person name="Confanioleri F."/>
            <person name="de Daruvar A."/>
            <person name="Despons L."/>
            <person name="Fabre E."/>
            <person name="Fairhead C."/>
            <person name="Ferry-Dumazet H."/>
            <person name="Groppi A."/>
            <person name="Hantraye F."/>
            <person name="Hennequin C."/>
            <person name="Jauniaux N."/>
            <person name="Joyet P."/>
            <person name="Kachouri R."/>
            <person name="Kerrest A."/>
            <person name="Koszul R."/>
            <person name="Lemaire M."/>
            <person name="Lesur I."/>
            <person name="Ma L."/>
            <person name="Muller H."/>
            <person name="Nicaud J.-M."/>
            <person name="Nikolski M."/>
            <person name="Oztas S."/>
            <person name="Ozier-Kalogeropoulos O."/>
            <person name="Pellenz S."/>
            <person name="Potier S."/>
            <person name="Richard G.-F."/>
            <person name="Straub M.-L."/>
            <person name="Suleau A."/>
            <person name="Swennen D."/>
            <person name="Tekaia F."/>
            <person name="Wesolowski-Louvel M."/>
            <person name="Westhof E."/>
            <person name="Wirth B."/>
            <person name="Zeniou-Meyer M."/>
            <person name="Zivanovic Y."/>
            <person name="Bolotin-Fukuhara M."/>
            <person name="Thierry A."/>
            <person name="Bouchier C."/>
            <person name="Caudron B."/>
            <person name="Scarpelli C."/>
            <person name="Gaillardin C."/>
            <person name="Weissenbach J."/>
            <person name="Wincker P."/>
            <person name="Souciet J.-L."/>
        </authorList>
    </citation>
    <scope>NUCLEOTIDE SEQUENCE [LARGE SCALE GENOMIC DNA]</scope>
    <source>
        <strain>ATCC 8585 / CBS 2359 / DSM 70799 / NBRC 1267 / NRRL Y-1140 / WM37</strain>
    </source>
</reference>
<comment type="subcellular location">
    <subcellularLocation>
        <location evidence="1">Mitochondrion</location>
    </subcellularLocation>
</comment>
<comment type="similarity">
    <text evidence="3">Belongs to the AIM18/AIM46 family.</text>
</comment>
<keyword id="KW-0496">Mitochondrion</keyword>
<keyword id="KW-1185">Reference proteome</keyword>
<keyword id="KW-0809">Transit peptide</keyword>